<sequence>MKTYVLQALLLTLAVAVVRAANTGIEWPPKPQKCAEGETWKECVGSSCAELTCEHPEPSLGCTYDCNYGCYCAPDFFRNANKECVKKDKCP</sequence>
<name>HYMOS_IXOSC</name>
<proteinExistence type="evidence at transcript level"/>
<evidence type="ECO:0000250" key="1">
    <source>
        <dbReference type="UniProtKB" id="P07851"/>
    </source>
</evidence>
<evidence type="ECO:0000255" key="2"/>
<evidence type="ECO:0000269" key="3">
    <source>
    </source>
</evidence>
<evidence type="ECO:0000303" key="4">
    <source>
    </source>
</evidence>
<evidence type="ECO:0000305" key="5"/>
<evidence type="ECO:0000312" key="6">
    <source>
        <dbReference type="EMBL" id="EEC04425.1"/>
    </source>
</evidence>
<evidence type="ECO:0000312" key="7">
    <source>
        <dbReference type="Proteomes" id="UP000001555"/>
    </source>
</evidence>
<reference evidence="7" key="1">
    <citation type="submission" date="2008-03" db="EMBL/GenBank/DDBJ databases">
        <title>Annotation of Ixodes scapularis.</title>
        <authorList>
            <consortium name="Ixodes scapularis Genome Project Consortium"/>
            <person name="Caler E."/>
            <person name="Hannick L.I."/>
            <person name="Bidwell S."/>
            <person name="Joardar V."/>
            <person name="Thiagarajan M."/>
            <person name="Amedeo P."/>
            <person name="Galinsky K.J."/>
            <person name="Schobel S."/>
            <person name="Inman J."/>
            <person name="Hostetler J."/>
            <person name="Miller J."/>
            <person name="Hammond M."/>
            <person name="Megy K."/>
            <person name="Lawson D."/>
            <person name="Kodira C."/>
            <person name="Sutton G."/>
            <person name="Meyer J."/>
            <person name="Hill C.A."/>
            <person name="Birren B."/>
            <person name="Nene V."/>
            <person name="Collins F."/>
            <person name="Alarcon-Chaidez F."/>
            <person name="Wikel S."/>
            <person name="Strausberg R."/>
        </authorList>
    </citation>
    <scope>NUCLEOTIDE SEQUENCE [LARGE SCALE GENOMIC DNA]</scope>
    <source>
        <strain evidence="7">Wikel</strain>
        <strain evidence="6">Wikel colony</strain>
    </source>
</reference>
<reference evidence="5" key="2">
    <citation type="journal article" date="2025" name="Int. J. Biol. Macromol.">
        <title>Ixochymostatin, a trypsin inhibitor-like (TIL) protein from Ixodes scapularis, inhibits chymase and impairs vascular permeability.</title>
        <authorList>
            <person name="Martins L.A."/>
            <person name="Berger M."/>
            <person name="Kotal J."/>
            <person name="Lu S."/>
            <person name="Sousa-Paula L.C."/>
            <person name="Smith B.J."/>
            <person name="Zhang Y."/>
            <person name="Andersen J.F."/>
            <person name="Tirloni L."/>
        </authorList>
    </citation>
    <scope>FUNCTION</scope>
    <scope>TISSUE SPECIFICITY</scope>
    <scope>DEVELOPMENTAL STAGE</scope>
</reference>
<gene>
    <name evidence="6" type="ORF">IscW_ISCW002768</name>
</gene>
<protein>
    <recommendedName>
        <fullName evidence="4">Ixochymostatin</fullName>
    </recommendedName>
    <alternativeName>
        <fullName evidence="5">Cysteine-rich venom protein 6-like</fullName>
    </alternativeName>
</protein>
<dbReference type="EMBL" id="ABJB010927913">
    <property type="status" value="NOT_ANNOTATED_CDS"/>
    <property type="molecule type" value="Genomic_DNA"/>
</dbReference>
<dbReference type="EMBL" id="ABJB011044498">
    <property type="status" value="NOT_ANNOTATED_CDS"/>
    <property type="molecule type" value="Genomic_DNA"/>
</dbReference>
<dbReference type="EMBL" id="DS686272">
    <property type="protein sequence ID" value="EEC04425.1"/>
    <property type="molecule type" value="Genomic_DNA"/>
</dbReference>
<dbReference type="RefSeq" id="XP_002410314.1">
    <property type="nucleotide sequence ID" value="XM_002410270.1"/>
</dbReference>
<dbReference type="PaxDb" id="6945-B7PCV3"/>
<dbReference type="EnsemblMetazoa" id="ISCW002768-RA">
    <property type="protein sequence ID" value="ISCW002768-PA"/>
    <property type="gene ID" value="ISCW002768"/>
</dbReference>
<dbReference type="EnsemblMetazoa" id="XM_040221246.3">
    <property type="protein sequence ID" value="XP_040077180.2"/>
    <property type="gene ID" value="LOC120849113"/>
</dbReference>
<dbReference type="VEuPathDB" id="VectorBase:ISCI002768"/>
<dbReference type="VEuPathDB" id="VectorBase:ISCP_029816"/>
<dbReference type="VEuPathDB" id="VectorBase:ISCW002768"/>
<dbReference type="HOGENOM" id="CLU_156801_3_0_1"/>
<dbReference type="InParanoid" id="B7PCV3"/>
<dbReference type="OMA" id="DQCEVAR"/>
<dbReference type="OrthoDB" id="10560758at2759"/>
<dbReference type="Proteomes" id="UP000001555">
    <property type="component" value="Unassembled WGS sequence"/>
</dbReference>
<dbReference type="GO" id="GO:0030414">
    <property type="term" value="F:peptidase inhibitor activity"/>
    <property type="evidence" value="ECO:0007669"/>
    <property type="project" value="UniProtKB-KW"/>
</dbReference>
<dbReference type="CDD" id="cd19941">
    <property type="entry name" value="TIL"/>
    <property type="match status" value="1"/>
</dbReference>
<dbReference type="Gene3D" id="2.10.25.10">
    <property type="entry name" value="Laminin"/>
    <property type="match status" value="1"/>
</dbReference>
<dbReference type="InterPro" id="IPR036084">
    <property type="entry name" value="Ser_inhib-like_sf"/>
</dbReference>
<dbReference type="InterPro" id="IPR051368">
    <property type="entry name" value="SerProtInhib-TIL_Domain"/>
</dbReference>
<dbReference type="InterPro" id="IPR002919">
    <property type="entry name" value="TIL_dom"/>
</dbReference>
<dbReference type="PANTHER" id="PTHR23259:SF69">
    <property type="entry name" value="GEO11767P1-RELATED"/>
    <property type="match status" value="1"/>
</dbReference>
<dbReference type="PANTHER" id="PTHR23259">
    <property type="entry name" value="RIDDLE"/>
    <property type="match status" value="1"/>
</dbReference>
<dbReference type="Pfam" id="PF01826">
    <property type="entry name" value="TIL"/>
    <property type="match status" value="1"/>
</dbReference>
<dbReference type="SUPFAM" id="SSF57567">
    <property type="entry name" value="Serine protease inhibitors"/>
    <property type="match status" value="1"/>
</dbReference>
<accession>B7PCV3</accession>
<feature type="signal peptide" evidence="2">
    <location>
        <begin position="1"/>
        <end position="20"/>
    </location>
</feature>
<feature type="chain" id="PRO_5014567972" description="Ixochymostatin" evidence="2">
    <location>
        <begin position="21"/>
        <end position="91"/>
    </location>
</feature>
<feature type="domain" description="TIL" evidence="2">
    <location>
        <begin position="34"/>
        <end position="90"/>
    </location>
</feature>
<feature type="disulfide bond" evidence="1">
    <location>
        <begin position="34"/>
        <end position="70"/>
    </location>
</feature>
<feature type="disulfide bond" evidence="1">
    <location>
        <begin position="43"/>
        <end position="66"/>
    </location>
</feature>
<feature type="disulfide bond" evidence="1">
    <location>
        <begin position="48"/>
        <end position="62"/>
    </location>
</feature>
<feature type="disulfide bond" evidence="1">
    <location>
        <begin position="53"/>
        <end position="90"/>
    </location>
</feature>
<feature type="disulfide bond" evidence="1">
    <location>
        <begin position="72"/>
        <end position="84"/>
    </location>
</feature>
<comment type="function">
    <text evidence="3">Tight-binding competitive inhibitor of chymotrypsin-like proteases; inhibits host chymase, cathepsin G (CTSG) and chymotrypsin (PubMed:39579814). Inhibits chymase-mediated generation of vasoconstrictor peptides: angiotensin II and endothelin I (PubMed:39579814). Reduces chymase-mediated vascular permeability and vascular endothelial-cadherin degradation (PubMed:39579814).</text>
</comment>
<comment type="subcellular location">
    <subcellularLocation>
        <location evidence="5">Secreted</location>
    </subcellularLocation>
</comment>
<comment type="tissue specificity">
    <text evidence="3">Salivary gland (PubMed:39579814). Midgut (PubMed:39579814).</text>
</comment>
<comment type="developmental stage">
    <text evidence="3">Expressed in larvae (PubMed:39579814). Expressed in nymphs (PubMed:39579814).</text>
</comment>
<comment type="similarity">
    <text evidence="5">Belongs to the serine protease inhibitor-like (TIL domain-containing) family.</text>
</comment>
<organism>
    <name type="scientific">Ixodes scapularis</name>
    <name type="common">Black-legged tick</name>
    <name type="synonym">Deer tick</name>
    <dbReference type="NCBI Taxonomy" id="6945"/>
    <lineage>
        <taxon>Eukaryota</taxon>
        <taxon>Metazoa</taxon>
        <taxon>Ecdysozoa</taxon>
        <taxon>Arthropoda</taxon>
        <taxon>Chelicerata</taxon>
        <taxon>Arachnida</taxon>
        <taxon>Acari</taxon>
        <taxon>Parasitiformes</taxon>
        <taxon>Ixodida</taxon>
        <taxon>Ixodoidea</taxon>
        <taxon>Ixodidae</taxon>
        <taxon>Ixodinae</taxon>
        <taxon>Ixodes</taxon>
    </lineage>
</organism>
<keyword id="KW-1015">Disulfide bond</keyword>
<keyword id="KW-0646">Protease inhibitor</keyword>
<keyword id="KW-1185">Reference proteome</keyword>
<keyword id="KW-0964">Secreted</keyword>
<keyword id="KW-0722">Serine protease inhibitor</keyword>
<keyword id="KW-0732">Signal</keyword>